<organism>
    <name type="scientific">Bos taurus</name>
    <name type="common">Bovine</name>
    <dbReference type="NCBI Taxonomy" id="9913"/>
    <lineage>
        <taxon>Eukaryota</taxon>
        <taxon>Metazoa</taxon>
        <taxon>Chordata</taxon>
        <taxon>Craniata</taxon>
        <taxon>Vertebrata</taxon>
        <taxon>Euteleostomi</taxon>
        <taxon>Mammalia</taxon>
        <taxon>Eutheria</taxon>
        <taxon>Laurasiatheria</taxon>
        <taxon>Artiodactyla</taxon>
        <taxon>Ruminantia</taxon>
        <taxon>Pecora</taxon>
        <taxon>Bovidae</taxon>
        <taxon>Bovinae</taxon>
        <taxon>Bos</taxon>
    </lineage>
</organism>
<protein>
    <recommendedName>
        <fullName>Guanine nucleotide-binding protein G(I)/G(S)/G(O) subunit gamma-11</fullName>
    </recommendedName>
</protein>
<sequence length="73" mass="8594">MPALHIEDLPEKEKLKMEVEQLRKEVKLQRQQVSKCSEEIKNYIEERSREDPLVKGIPEDKNPFKEKGSCIIS</sequence>
<feature type="chain" id="PRO_0000042175" description="Guanine nucleotide-binding protein G(I)/G(S)/G(O) subunit gamma-11">
    <location>
        <begin position="1"/>
        <end position="70"/>
    </location>
</feature>
<feature type="propeptide" id="PRO_0000042176" description="Removed in mature form" evidence="1">
    <location>
        <begin position="71"/>
        <end position="73"/>
    </location>
</feature>
<feature type="region of interest" description="Disordered" evidence="2">
    <location>
        <begin position="54"/>
        <end position="73"/>
    </location>
</feature>
<feature type="modified residue" description="Cysteine methyl ester" evidence="1">
    <location>
        <position position="70"/>
    </location>
</feature>
<feature type="lipid moiety-binding region" description="S-farnesyl cysteine" evidence="1">
    <location>
        <position position="70"/>
    </location>
</feature>
<comment type="function">
    <text>Guanine nucleotide-binding proteins (G proteins) are involved as a modulator or transducer in various transmembrane signaling systems. The beta and gamma chains are required for the GTPase activity, for replacement of GDP by GTP, and for G protein-effector interaction.</text>
</comment>
<comment type="subunit">
    <text evidence="1">G proteins are composed of 3 units, alpha, beta and gamma. Interacts with beta-1 and beta-3, but not with beta-2 (By similarity).</text>
</comment>
<comment type="subcellular location">
    <subcellularLocation>
        <location evidence="3">Cell membrane</location>
        <topology evidence="3">Lipid-anchor</topology>
        <orientation evidence="3">Cytoplasmic side</orientation>
    </subcellularLocation>
</comment>
<comment type="similarity">
    <text evidence="3">Belongs to the G protein gamma family.</text>
</comment>
<keyword id="KW-1003">Cell membrane</keyword>
<keyword id="KW-0449">Lipoprotein</keyword>
<keyword id="KW-0472">Membrane</keyword>
<keyword id="KW-0488">Methylation</keyword>
<keyword id="KW-0636">Prenylation</keyword>
<keyword id="KW-1185">Reference proteome</keyword>
<keyword id="KW-0807">Transducer</keyword>
<name>GBG11_BOVIN</name>
<dbReference type="EMBL" id="BT020970">
    <property type="protein sequence ID" value="AAX08987.1"/>
    <property type="molecule type" value="mRNA"/>
</dbReference>
<dbReference type="EMBL" id="BC102674">
    <property type="protein sequence ID" value="AAI02675.1"/>
    <property type="molecule type" value="mRNA"/>
</dbReference>
<dbReference type="RefSeq" id="NP_001019694.1">
    <property type="nucleotide sequence ID" value="NM_001024523.1"/>
</dbReference>
<dbReference type="SMR" id="Q5E9F0"/>
<dbReference type="FunCoup" id="Q5E9F0">
    <property type="interactions" value="538"/>
</dbReference>
<dbReference type="STRING" id="9913.ENSBTAP00000001086"/>
<dbReference type="PaxDb" id="9913-ENSBTAP00000001086"/>
<dbReference type="Ensembl" id="ENSBTAT00000001086.5">
    <property type="protein sequence ID" value="ENSBTAP00000001086.4"/>
    <property type="gene ID" value="ENSBTAG00000000820.5"/>
</dbReference>
<dbReference type="GeneID" id="511812"/>
<dbReference type="KEGG" id="bta:511812"/>
<dbReference type="CTD" id="2791"/>
<dbReference type="VEuPathDB" id="HostDB:ENSBTAG00000000820"/>
<dbReference type="VGNC" id="VGNC:53646">
    <property type="gene designation" value="GNG11"/>
</dbReference>
<dbReference type="eggNOG" id="KOG4119">
    <property type="taxonomic scope" value="Eukaryota"/>
</dbReference>
<dbReference type="GeneTree" id="ENSGT01100000263525"/>
<dbReference type="HOGENOM" id="CLU_168377_2_0_1"/>
<dbReference type="InParanoid" id="Q5E9F0"/>
<dbReference type="OMA" id="KLERWMT"/>
<dbReference type="OrthoDB" id="9933679at2759"/>
<dbReference type="TreeFam" id="TF319909"/>
<dbReference type="Reactome" id="R-BTA-1296041">
    <property type="pathway name" value="Activation of G protein gated Potassium channels"/>
</dbReference>
<dbReference type="Reactome" id="R-BTA-202040">
    <property type="pathway name" value="G-protein activation"/>
</dbReference>
<dbReference type="Reactome" id="R-BTA-381676">
    <property type="pathway name" value="Glucagon-like Peptide-1 (GLP1) regulates insulin secretion"/>
</dbReference>
<dbReference type="Reactome" id="R-BTA-392170">
    <property type="pathway name" value="ADP signalling through P2Y purinoceptor 12"/>
</dbReference>
<dbReference type="Reactome" id="R-BTA-392451">
    <property type="pathway name" value="G beta:gamma signalling through PI3Kgamma"/>
</dbReference>
<dbReference type="Reactome" id="R-BTA-392851">
    <property type="pathway name" value="Prostacyclin signalling through prostacyclin receptor"/>
</dbReference>
<dbReference type="Reactome" id="R-BTA-400042">
    <property type="pathway name" value="Adrenaline,noradrenaline inhibits insulin secretion"/>
</dbReference>
<dbReference type="Reactome" id="R-BTA-4086398">
    <property type="pathway name" value="Ca2+ pathway"/>
</dbReference>
<dbReference type="Reactome" id="R-BTA-416476">
    <property type="pathway name" value="G alpha (q) signalling events"/>
</dbReference>
<dbReference type="Reactome" id="R-BTA-416482">
    <property type="pathway name" value="G alpha (12/13) signalling events"/>
</dbReference>
<dbReference type="Reactome" id="R-BTA-418217">
    <property type="pathway name" value="G beta:gamma signalling through PLC beta"/>
</dbReference>
<dbReference type="Reactome" id="R-BTA-418555">
    <property type="pathway name" value="G alpha (s) signalling events"/>
</dbReference>
<dbReference type="Reactome" id="R-BTA-418592">
    <property type="pathway name" value="ADP signalling through P2Y purinoceptor 1"/>
</dbReference>
<dbReference type="Reactome" id="R-BTA-418594">
    <property type="pathway name" value="G alpha (i) signalling events"/>
</dbReference>
<dbReference type="Reactome" id="R-BTA-418597">
    <property type="pathway name" value="G alpha (z) signalling events"/>
</dbReference>
<dbReference type="Reactome" id="R-BTA-420092">
    <property type="pathway name" value="Glucagon-type ligand receptors"/>
</dbReference>
<dbReference type="Reactome" id="R-BTA-428930">
    <property type="pathway name" value="Thromboxane signalling through TP receptor"/>
</dbReference>
<dbReference type="Reactome" id="R-BTA-432040">
    <property type="pathway name" value="Vasopressin regulates renal water homeostasis via Aquaporins"/>
</dbReference>
<dbReference type="Reactome" id="R-BTA-456926">
    <property type="pathway name" value="Thrombin signalling through proteinase activated receptors (PARs)"/>
</dbReference>
<dbReference type="Reactome" id="R-BTA-500657">
    <property type="pathway name" value="Presynaptic function of Kainate receptors"/>
</dbReference>
<dbReference type="Reactome" id="R-BTA-6814122">
    <property type="pathway name" value="Cooperation of PDCL (PhLP1) and TRiC/CCT in G-protein beta folding"/>
</dbReference>
<dbReference type="Reactome" id="R-BTA-8964315">
    <property type="pathway name" value="G beta:gamma signalling through BTK"/>
</dbReference>
<dbReference type="Reactome" id="R-BTA-8964616">
    <property type="pathway name" value="G beta:gamma signalling through CDC42"/>
</dbReference>
<dbReference type="Reactome" id="R-BTA-9009391">
    <property type="pathway name" value="Extra-nuclear estrogen signaling"/>
</dbReference>
<dbReference type="Reactome" id="R-BTA-9856530">
    <property type="pathway name" value="High laminar flow shear stress activates signaling by PIEZO1 and PECAM1:CDH5:KDR in endothelial cells"/>
</dbReference>
<dbReference type="Reactome" id="R-BTA-997272">
    <property type="pathway name" value="Inhibition of voltage gated Ca2+ channels via Gbeta/gamma subunits"/>
</dbReference>
<dbReference type="Proteomes" id="UP000009136">
    <property type="component" value="Chromosome 4"/>
</dbReference>
<dbReference type="Bgee" id="ENSBTAG00000000820">
    <property type="expression patterns" value="Expressed in myometrium and 106 other cell types or tissues"/>
</dbReference>
<dbReference type="GO" id="GO:0005834">
    <property type="term" value="C:heterotrimeric G-protein complex"/>
    <property type="evidence" value="ECO:0000318"/>
    <property type="project" value="GO_Central"/>
</dbReference>
<dbReference type="GO" id="GO:0031681">
    <property type="term" value="F:G-protein beta-subunit binding"/>
    <property type="evidence" value="ECO:0000318"/>
    <property type="project" value="GO_Central"/>
</dbReference>
<dbReference type="GO" id="GO:0007186">
    <property type="term" value="P:G protein-coupled receptor signaling pathway"/>
    <property type="evidence" value="ECO:0000318"/>
    <property type="project" value="GO_Central"/>
</dbReference>
<dbReference type="CDD" id="cd00068">
    <property type="entry name" value="GGL"/>
    <property type="match status" value="1"/>
</dbReference>
<dbReference type="FunFam" id="4.10.260.10:FF:000001">
    <property type="entry name" value="Guanine nucleotide-binding protein subunit gamma"/>
    <property type="match status" value="1"/>
</dbReference>
<dbReference type="Gene3D" id="4.10.260.10">
    <property type="entry name" value="Transducin (heterotrimeric G protein), gamma chain"/>
    <property type="match status" value="1"/>
</dbReference>
<dbReference type="InterPro" id="IPR015898">
    <property type="entry name" value="G-protein_gamma-like_dom"/>
</dbReference>
<dbReference type="InterPro" id="IPR036284">
    <property type="entry name" value="GGL_sf"/>
</dbReference>
<dbReference type="InterPro" id="IPR001770">
    <property type="entry name" value="Gprotein-gamma"/>
</dbReference>
<dbReference type="PANTHER" id="PTHR13809">
    <property type="entry name" value="GUANINE NUCLEOTIDE-BINDING PROTEIN GAMMA SUBUNIT"/>
    <property type="match status" value="1"/>
</dbReference>
<dbReference type="Pfam" id="PF00631">
    <property type="entry name" value="G-gamma"/>
    <property type="match status" value="1"/>
</dbReference>
<dbReference type="PRINTS" id="PR00321">
    <property type="entry name" value="GPROTEING"/>
</dbReference>
<dbReference type="SMART" id="SM01224">
    <property type="entry name" value="G_gamma"/>
    <property type="match status" value="1"/>
</dbReference>
<dbReference type="SMART" id="SM00224">
    <property type="entry name" value="GGL"/>
    <property type="match status" value="1"/>
</dbReference>
<dbReference type="SUPFAM" id="SSF48670">
    <property type="entry name" value="Transducin (heterotrimeric G protein), gamma chain"/>
    <property type="match status" value="1"/>
</dbReference>
<dbReference type="PROSITE" id="PS50058">
    <property type="entry name" value="G_PROTEIN_GAMMA"/>
    <property type="match status" value="1"/>
</dbReference>
<proteinExistence type="inferred from homology"/>
<reference key="1">
    <citation type="journal article" date="2005" name="BMC Genomics">
        <title>Characterization of 954 bovine full-CDS cDNA sequences.</title>
        <authorList>
            <person name="Harhay G.P."/>
            <person name="Sonstegard T.S."/>
            <person name="Keele J.W."/>
            <person name="Heaton M.P."/>
            <person name="Clawson M.L."/>
            <person name="Snelling W.M."/>
            <person name="Wiedmann R.T."/>
            <person name="Van Tassell C.P."/>
            <person name="Smith T.P.L."/>
        </authorList>
    </citation>
    <scope>NUCLEOTIDE SEQUENCE [LARGE SCALE MRNA]</scope>
</reference>
<reference key="2">
    <citation type="submission" date="2005-08" db="EMBL/GenBank/DDBJ databases">
        <authorList>
            <consortium name="NIH - Mammalian Gene Collection (MGC) project"/>
        </authorList>
    </citation>
    <scope>NUCLEOTIDE SEQUENCE [LARGE SCALE MRNA]</scope>
    <source>
        <strain>Crossbred X Angus</strain>
        <tissue>Liver</tissue>
    </source>
</reference>
<gene>
    <name type="primary">GNG11</name>
</gene>
<accession>Q5E9F0</accession>
<accession>Q3SZW7</accession>
<evidence type="ECO:0000250" key="1"/>
<evidence type="ECO:0000256" key="2">
    <source>
        <dbReference type="SAM" id="MobiDB-lite"/>
    </source>
</evidence>
<evidence type="ECO:0000305" key="3"/>